<sequence>MQKDIGRRFQRNKKKINSKPGGAMVASSDVEFSLDGMSIMPQRDGNLQIPNFVKPKSTFATSNIGESNGKRNGDKVRGNRRSKSGHSSYAGSRISGGNSNSHLPSGVASAPAGLGIDKVAVGEVDSHLKSVSSYVSNSSGADRSFSSNSSSDTNSILYAGPTFTHSPAASNLPIPTFLHSPVSEKAEWQPPTGSVNSNMPFQFHQSSSVPSTPSEVAMGHNFCPMSRNDPSLQSIQQTNGFYSGHNSPHTNYSASTPSFNHFNAAGHPTGNITPTLNSPNNGIHCHSTSALDLLFHRDREQRLFRMLRQGSA</sequence>
<gene>
    <name type="ORF">SPAC18G6.09c</name>
</gene>
<protein>
    <recommendedName>
        <fullName>Uncharacterized protein C18G6.09c</fullName>
    </recommendedName>
</protein>
<keyword id="KW-0002">3D-structure</keyword>
<keyword id="KW-1185">Reference proteome</keyword>
<evidence type="ECO:0000256" key="1">
    <source>
        <dbReference type="SAM" id="MobiDB-lite"/>
    </source>
</evidence>
<evidence type="ECO:0007829" key="2">
    <source>
        <dbReference type="PDB" id="5J3T"/>
    </source>
</evidence>
<dbReference type="EMBL" id="CU329670">
    <property type="protein sequence ID" value="CAA92387.1"/>
    <property type="molecule type" value="Genomic_DNA"/>
</dbReference>
<dbReference type="PIR" id="T37922">
    <property type="entry name" value="T37922"/>
</dbReference>
<dbReference type="PDB" id="5J3Q">
    <property type="method" value="X-ray"/>
    <property type="resolution" value="1.87 A"/>
    <property type="chains" value="B/D=155-180"/>
</dbReference>
<dbReference type="PDB" id="5J3T">
    <property type="method" value="X-ray"/>
    <property type="resolution" value="1.60 A"/>
    <property type="chains" value="C=155-180"/>
</dbReference>
<dbReference type="PDB" id="5JP4">
    <property type="method" value="X-ray"/>
    <property type="resolution" value="2.04 A"/>
    <property type="chains" value="B=156-181"/>
</dbReference>
<dbReference type="PDB" id="5N2V">
    <property type="method" value="X-ray"/>
    <property type="resolution" value="3.10 A"/>
    <property type="chains" value="C/F=155-180"/>
</dbReference>
<dbReference type="PDBsum" id="5J3Q"/>
<dbReference type="PDBsum" id="5J3T"/>
<dbReference type="PDBsum" id="5JP4"/>
<dbReference type="PDBsum" id="5N2V"/>
<dbReference type="SMR" id="Q10108"/>
<dbReference type="BioGRID" id="278993">
    <property type="interactions" value="3"/>
</dbReference>
<dbReference type="DIP" id="DIP-62103N"/>
<dbReference type="STRING" id="284812.Q10108"/>
<dbReference type="iPTMnet" id="Q10108"/>
<dbReference type="PaxDb" id="4896-SPAC18G6.09c.1"/>
<dbReference type="EnsemblFungi" id="SPAC18G6.09c.1">
    <property type="protein sequence ID" value="SPAC18G6.09c.1:pep"/>
    <property type="gene ID" value="SPAC18G6.09c"/>
</dbReference>
<dbReference type="KEGG" id="spo:2542536"/>
<dbReference type="PomBase" id="SPAC18G6.09c"/>
<dbReference type="VEuPathDB" id="FungiDB:SPAC18G6.09c"/>
<dbReference type="HOGENOM" id="CLU_877603_0_0_1"/>
<dbReference type="InParanoid" id="Q10108"/>
<dbReference type="OMA" id="MEKRIGH"/>
<dbReference type="PRO" id="PR:Q10108"/>
<dbReference type="Proteomes" id="UP000002485">
    <property type="component" value="Chromosome I"/>
</dbReference>
<dbReference type="GO" id="GO:0005829">
    <property type="term" value="C:cytosol"/>
    <property type="evidence" value="ECO:0007005"/>
    <property type="project" value="PomBase"/>
</dbReference>
<dbReference type="GO" id="GO:0005634">
    <property type="term" value="C:nucleus"/>
    <property type="evidence" value="ECO:0007005"/>
    <property type="project" value="PomBase"/>
</dbReference>
<dbReference type="GO" id="GO:0098745">
    <property type="term" value="C:RNA decapping complex"/>
    <property type="evidence" value="ECO:0000314"/>
    <property type="project" value="PomBase"/>
</dbReference>
<dbReference type="GO" id="GO:0170008">
    <property type="term" value="F:mRNA phosphatase activator activity"/>
    <property type="evidence" value="ECO:0000314"/>
    <property type="project" value="PomBase"/>
</dbReference>
<dbReference type="GO" id="GO:0110156">
    <property type="term" value="P:mRNA methylguanosine-cap decapping"/>
    <property type="evidence" value="ECO:0000314"/>
    <property type="project" value="PomBase"/>
</dbReference>
<dbReference type="InterPro" id="IPR028322">
    <property type="entry name" value="PNRC-like_rgn"/>
</dbReference>
<dbReference type="Pfam" id="PF15365">
    <property type="entry name" value="PNRC"/>
    <property type="match status" value="1"/>
</dbReference>
<name>YAQ9_SCHPO</name>
<proteinExistence type="evidence at protein level"/>
<reference key="1">
    <citation type="journal article" date="2002" name="Nature">
        <title>The genome sequence of Schizosaccharomyces pombe.</title>
        <authorList>
            <person name="Wood V."/>
            <person name="Gwilliam R."/>
            <person name="Rajandream M.A."/>
            <person name="Lyne M.H."/>
            <person name="Lyne R."/>
            <person name="Stewart A."/>
            <person name="Sgouros J.G."/>
            <person name="Peat N."/>
            <person name="Hayles J."/>
            <person name="Baker S.G."/>
            <person name="Basham D."/>
            <person name="Bowman S."/>
            <person name="Brooks K."/>
            <person name="Brown D."/>
            <person name="Brown S."/>
            <person name="Chillingworth T."/>
            <person name="Churcher C.M."/>
            <person name="Collins M."/>
            <person name="Connor R."/>
            <person name="Cronin A."/>
            <person name="Davis P."/>
            <person name="Feltwell T."/>
            <person name="Fraser A."/>
            <person name="Gentles S."/>
            <person name="Goble A."/>
            <person name="Hamlin N."/>
            <person name="Harris D.E."/>
            <person name="Hidalgo J."/>
            <person name="Hodgson G."/>
            <person name="Holroyd S."/>
            <person name="Hornsby T."/>
            <person name="Howarth S."/>
            <person name="Huckle E.J."/>
            <person name="Hunt S."/>
            <person name="Jagels K."/>
            <person name="James K.D."/>
            <person name="Jones L."/>
            <person name="Jones M."/>
            <person name="Leather S."/>
            <person name="McDonald S."/>
            <person name="McLean J."/>
            <person name="Mooney P."/>
            <person name="Moule S."/>
            <person name="Mungall K.L."/>
            <person name="Murphy L.D."/>
            <person name="Niblett D."/>
            <person name="Odell C."/>
            <person name="Oliver K."/>
            <person name="O'Neil S."/>
            <person name="Pearson D."/>
            <person name="Quail M.A."/>
            <person name="Rabbinowitsch E."/>
            <person name="Rutherford K.M."/>
            <person name="Rutter S."/>
            <person name="Saunders D."/>
            <person name="Seeger K."/>
            <person name="Sharp S."/>
            <person name="Skelton J."/>
            <person name="Simmonds M.N."/>
            <person name="Squares R."/>
            <person name="Squares S."/>
            <person name="Stevens K."/>
            <person name="Taylor K."/>
            <person name="Taylor R.G."/>
            <person name="Tivey A."/>
            <person name="Walsh S.V."/>
            <person name="Warren T."/>
            <person name="Whitehead S."/>
            <person name="Woodward J.R."/>
            <person name="Volckaert G."/>
            <person name="Aert R."/>
            <person name="Robben J."/>
            <person name="Grymonprez B."/>
            <person name="Weltjens I."/>
            <person name="Vanstreels E."/>
            <person name="Rieger M."/>
            <person name="Schaefer M."/>
            <person name="Mueller-Auer S."/>
            <person name="Gabel C."/>
            <person name="Fuchs M."/>
            <person name="Duesterhoeft A."/>
            <person name="Fritzc C."/>
            <person name="Holzer E."/>
            <person name="Moestl D."/>
            <person name="Hilbert H."/>
            <person name="Borzym K."/>
            <person name="Langer I."/>
            <person name="Beck A."/>
            <person name="Lehrach H."/>
            <person name="Reinhardt R."/>
            <person name="Pohl T.M."/>
            <person name="Eger P."/>
            <person name="Zimmermann W."/>
            <person name="Wedler H."/>
            <person name="Wambutt R."/>
            <person name="Purnelle B."/>
            <person name="Goffeau A."/>
            <person name="Cadieu E."/>
            <person name="Dreano S."/>
            <person name="Gloux S."/>
            <person name="Lelaure V."/>
            <person name="Mottier S."/>
            <person name="Galibert F."/>
            <person name="Aves S.J."/>
            <person name="Xiang Z."/>
            <person name="Hunt C."/>
            <person name="Moore K."/>
            <person name="Hurst S.M."/>
            <person name="Lucas M."/>
            <person name="Rochet M."/>
            <person name="Gaillardin C."/>
            <person name="Tallada V.A."/>
            <person name="Garzon A."/>
            <person name="Thode G."/>
            <person name="Daga R.R."/>
            <person name="Cruzado L."/>
            <person name="Jimenez J."/>
            <person name="Sanchez M."/>
            <person name="del Rey F."/>
            <person name="Benito J."/>
            <person name="Dominguez A."/>
            <person name="Revuelta J.L."/>
            <person name="Moreno S."/>
            <person name="Armstrong J."/>
            <person name="Forsburg S.L."/>
            <person name="Cerutti L."/>
            <person name="Lowe T."/>
            <person name="McCombie W.R."/>
            <person name="Paulsen I."/>
            <person name="Potashkin J."/>
            <person name="Shpakovski G.V."/>
            <person name="Ussery D."/>
            <person name="Barrell B.G."/>
            <person name="Nurse P."/>
        </authorList>
    </citation>
    <scope>NUCLEOTIDE SEQUENCE [LARGE SCALE GENOMIC DNA]</scope>
    <source>
        <strain>972 / ATCC 24843</strain>
    </source>
</reference>
<accession>Q10108</accession>
<organism>
    <name type="scientific">Schizosaccharomyces pombe (strain 972 / ATCC 24843)</name>
    <name type="common">Fission yeast</name>
    <dbReference type="NCBI Taxonomy" id="284812"/>
    <lineage>
        <taxon>Eukaryota</taxon>
        <taxon>Fungi</taxon>
        <taxon>Dikarya</taxon>
        <taxon>Ascomycota</taxon>
        <taxon>Taphrinomycotina</taxon>
        <taxon>Schizosaccharomycetes</taxon>
        <taxon>Schizosaccharomycetales</taxon>
        <taxon>Schizosaccharomycetaceae</taxon>
        <taxon>Schizosaccharomyces</taxon>
    </lineage>
</organism>
<feature type="chain" id="PRO_0000116459" description="Uncharacterized protein C18G6.09c">
    <location>
        <begin position="1"/>
        <end position="312"/>
    </location>
</feature>
<feature type="region of interest" description="Disordered" evidence="1">
    <location>
        <begin position="1"/>
        <end position="26"/>
    </location>
</feature>
<feature type="region of interest" description="Disordered" evidence="1">
    <location>
        <begin position="45"/>
        <end position="106"/>
    </location>
</feature>
<feature type="compositionally biased region" description="Basic residues" evidence="1">
    <location>
        <begin position="8"/>
        <end position="17"/>
    </location>
</feature>
<feature type="compositionally biased region" description="Basic and acidic residues" evidence="1">
    <location>
        <begin position="68"/>
        <end position="77"/>
    </location>
</feature>
<feature type="compositionally biased region" description="Polar residues" evidence="1">
    <location>
        <begin position="85"/>
        <end position="103"/>
    </location>
</feature>
<feature type="strand" evidence="2">
    <location>
        <begin position="156"/>
        <end position="159"/>
    </location>
</feature>
<feature type="helix" evidence="2">
    <location>
        <begin position="169"/>
        <end position="171"/>
    </location>
</feature>
<feature type="helix" evidence="2">
    <location>
        <begin position="176"/>
        <end position="178"/>
    </location>
</feature>